<proteinExistence type="inferred from homology"/>
<dbReference type="EC" id="2.7.7.6" evidence="1"/>
<dbReference type="EMBL" id="AE000666">
    <property type="protein sequence ID" value="AAB85542.1"/>
    <property type="molecule type" value="Genomic_DNA"/>
</dbReference>
<dbReference type="PIR" id="G69006">
    <property type="entry name" value="G69006"/>
</dbReference>
<dbReference type="RefSeq" id="WP_010876677.1">
    <property type="nucleotide sequence ID" value="NC_000916.1"/>
</dbReference>
<dbReference type="SMR" id="O27125"/>
<dbReference type="FunCoup" id="O27125">
    <property type="interactions" value="154"/>
</dbReference>
<dbReference type="STRING" id="187420.MTH_1051"/>
<dbReference type="PaxDb" id="187420-MTH_1051"/>
<dbReference type="EnsemblBacteria" id="AAB85542">
    <property type="protein sequence ID" value="AAB85542"/>
    <property type="gene ID" value="MTH_1051"/>
</dbReference>
<dbReference type="GeneID" id="1471459"/>
<dbReference type="GeneID" id="77401582"/>
<dbReference type="KEGG" id="mth:MTH_1051"/>
<dbReference type="PATRIC" id="fig|187420.15.peg.1030"/>
<dbReference type="HOGENOM" id="CLU_000487_3_1_2"/>
<dbReference type="InParanoid" id="O27125"/>
<dbReference type="Proteomes" id="UP000005223">
    <property type="component" value="Chromosome"/>
</dbReference>
<dbReference type="GO" id="GO:0005737">
    <property type="term" value="C:cytoplasm"/>
    <property type="evidence" value="ECO:0007669"/>
    <property type="project" value="UniProtKB-SubCell"/>
</dbReference>
<dbReference type="GO" id="GO:0000428">
    <property type="term" value="C:DNA-directed RNA polymerase complex"/>
    <property type="evidence" value="ECO:0007669"/>
    <property type="project" value="UniProtKB-KW"/>
</dbReference>
<dbReference type="GO" id="GO:0003677">
    <property type="term" value="F:DNA binding"/>
    <property type="evidence" value="ECO:0007669"/>
    <property type="project" value="UniProtKB-UniRule"/>
</dbReference>
<dbReference type="GO" id="GO:0003899">
    <property type="term" value="F:DNA-directed RNA polymerase activity"/>
    <property type="evidence" value="ECO:0007669"/>
    <property type="project" value="UniProtKB-UniRule"/>
</dbReference>
<dbReference type="GO" id="GO:0000287">
    <property type="term" value="F:magnesium ion binding"/>
    <property type="evidence" value="ECO:0007669"/>
    <property type="project" value="UniProtKB-UniRule"/>
</dbReference>
<dbReference type="GO" id="GO:0008270">
    <property type="term" value="F:zinc ion binding"/>
    <property type="evidence" value="ECO:0007669"/>
    <property type="project" value="UniProtKB-UniRule"/>
</dbReference>
<dbReference type="GO" id="GO:0006351">
    <property type="term" value="P:DNA-templated transcription"/>
    <property type="evidence" value="ECO:0007669"/>
    <property type="project" value="UniProtKB-UniRule"/>
</dbReference>
<dbReference type="CDD" id="cd02582">
    <property type="entry name" value="RNAP_archeal_A"/>
    <property type="match status" value="1"/>
</dbReference>
<dbReference type="FunFam" id="2.40.40.20:FF:000019">
    <property type="entry name" value="DNA-directed RNA polymerase II subunit RPB1"/>
    <property type="match status" value="1"/>
</dbReference>
<dbReference type="FunFam" id="4.10.860.120:FF:000003">
    <property type="entry name" value="DNA-directed RNA polymerase subunit"/>
    <property type="match status" value="1"/>
</dbReference>
<dbReference type="Gene3D" id="1.10.10.1950">
    <property type="match status" value="2"/>
</dbReference>
<dbReference type="Gene3D" id="1.10.132.30">
    <property type="match status" value="1"/>
</dbReference>
<dbReference type="Gene3D" id="2.40.40.20">
    <property type="match status" value="1"/>
</dbReference>
<dbReference type="Gene3D" id="2.60.40.2940">
    <property type="match status" value="1"/>
</dbReference>
<dbReference type="Gene3D" id="6.10.250.2940">
    <property type="match status" value="1"/>
</dbReference>
<dbReference type="Gene3D" id="6.20.50.80">
    <property type="match status" value="1"/>
</dbReference>
<dbReference type="Gene3D" id="3.30.1490.180">
    <property type="entry name" value="RNA polymerase ii"/>
    <property type="match status" value="1"/>
</dbReference>
<dbReference type="Gene3D" id="4.10.860.120">
    <property type="entry name" value="RNA polymerase II, clamp domain"/>
    <property type="match status" value="2"/>
</dbReference>
<dbReference type="HAMAP" id="MF_00863">
    <property type="entry name" value="RNApol_arch_Rpo1N"/>
    <property type="match status" value="1"/>
</dbReference>
<dbReference type="InterPro" id="IPR045867">
    <property type="entry name" value="DNA-dir_RpoC_beta_prime"/>
</dbReference>
<dbReference type="InterPro" id="IPR000722">
    <property type="entry name" value="RNA_pol_asu"/>
</dbReference>
<dbReference type="InterPro" id="IPR006592">
    <property type="entry name" value="RNA_pol_N"/>
</dbReference>
<dbReference type="InterPro" id="IPR007080">
    <property type="entry name" value="RNA_pol_Rpb1_1"/>
</dbReference>
<dbReference type="InterPro" id="IPR007066">
    <property type="entry name" value="RNA_pol_Rpb1_3"/>
</dbReference>
<dbReference type="InterPro" id="IPR007083">
    <property type="entry name" value="RNA_pol_Rpb1_4"/>
</dbReference>
<dbReference type="InterPro" id="IPR007081">
    <property type="entry name" value="RNA_pol_Rpb1_5"/>
</dbReference>
<dbReference type="InterPro" id="IPR044893">
    <property type="entry name" value="RNA_pol_Rpb1_clamp_domain"/>
</dbReference>
<dbReference type="InterPro" id="IPR038120">
    <property type="entry name" value="Rpb1_funnel_sf"/>
</dbReference>
<dbReference type="InterPro" id="IPR012758">
    <property type="entry name" value="RPO1N"/>
</dbReference>
<dbReference type="NCBIfam" id="NF006336">
    <property type="entry name" value="PRK08566.1"/>
    <property type="match status" value="1"/>
</dbReference>
<dbReference type="NCBIfam" id="TIGR02390">
    <property type="entry name" value="RNA_pol_rpoA1"/>
    <property type="match status" value="1"/>
</dbReference>
<dbReference type="PANTHER" id="PTHR19376">
    <property type="entry name" value="DNA-DIRECTED RNA POLYMERASE"/>
    <property type="match status" value="1"/>
</dbReference>
<dbReference type="PANTHER" id="PTHR19376:SF32">
    <property type="entry name" value="DNA-DIRECTED RNA POLYMERASE III SUBUNIT RPC1"/>
    <property type="match status" value="1"/>
</dbReference>
<dbReference type="Pfam" id="PF04997">
    <property type="entry name" value="RNA_pol_Rpb1_1"/>
    <property type="match status" value="1"/>
</dbReference>
<dbReference type="Pfam" id="PF00623">
    <property type="entry name" value="RNA_pol_Rpb1_2"/>
    <property type="match status" value="1"/>
</dbReference>
<dbReference type="Pfam" id="PF04983">
    <property type="entry name" value="RNA_pol_Rpb1_3"/>
    <property type="match status" value="1"/>
</dbReference>
<dbReference type="Pfam" id="PF05000">
    <property type="entry name" value="RNA_pol_Rpb1_4"/>
    <property type="match status" value="1"/>
</dbReference>
<dbReference type="Pfam" id="PF04998">
    <property type="entry name" value="RNA_pol_Rpb1_5"/>
    <property type="match status" value="1"/>
</dbReference>
<dbReference type="SMART" id="SM00663">
    <property type="entry name" value="RPOLA_N"/>
    <property type="match status" value="1"/>
</dbReference>
<dbReference type="SUPFAM" id="SSF64484">
    <property type="entry name" value="beta and beta-prime subunits of DNA dependent RNA-polymerase"/>
    <property type="match status" value="1"/>
</dbReference>
<sequence length="870" mass="98078">MRGILKKISQINFGLMSPEDIRKMSVTQIVTPDTYDEDGYPIENGLMDPRLGVIDPSLRCRTCGAKGGECPGHFGSINLARPVIHVGFADTIHKILRSTCRKCGRVLLTETEIEEYRQRILDAMEKEESLTPIIKEIYAEARRDKCPHCEEEQEEIKLDKPVSIVEGDYKLTPSEVRERLERISDDDALILGVNPEVARPEWMVLTVLPVPPVTVRPSITLETGERSEDDLTHKLVDILRINQRLKENMEAGAPQLIVEDLWELLQYHVTTYFDNEASGVPPARHRSGRPLKTLAQRLKGKEGRFRSNLSGKRVNFSARTVISPDPNISINEVGVPEIIAREVTVPVYVTEWNIDRMREYIENGPDVHPGANYVIRPDGRKIRIYNETKEVVLENLKPGYIVERHLKDGDIVLFNRQPSLHRMSMMAHQVRVLPYKTFRLNLCVCPPYNADFDGDEMNMHVFQTEESRAEAKTLMRVQEHILSPRFGGPIIGGIHDHISGAYLLTRKSAVFSEEKVFQILKKAGLPLPDSRGRDWTGKEIFSMVLPDDLNMVYRAEVCRKCEECLEMECENDAYVVIENGQLISGVIDEKAYGAFAGKILDHIVKEYGTDAAREFLDSATKLAIAGIMHAGFTTSTNDEEIPEEARERIEAHLRNAEARVDQLIEAYENGELEPLPGRSLEETLEMKIMQVLGEARDKSGEIAESYFDMDENHAVIMALTGARGSMLNLTQITACVGQQSVRGGRISRGYDNRTLPHFKKGELGAKSRGFVHSSYKEGLDPIEFFFHAMGGREGLVDTAIRTAQSGYMQRRLVNALQDLTVDENGRVVDNRGVIIQNRFGEDGVDPAKSDYGKIVDLDKLVEEIRLKSKG</sequence>
<name>RPO1N_METTH</name>
<reference key="1">
    <citation type="journal article" date="1997" name="J. Bacteriol.">
        <title>Complete genome sequence of Methanobacterium thermoautotrophicum deltaH: functional analysis and comparative genomics.</title>
        <authorList>
            <person name="Smith D.R."/>
            <person name="Doucette-Stamm L.A."/>
            <person name="Deloughery C."/>
            <person name="Lee H.-M."/>
            <person name="Dubois J."/>
            <person name="Aldredge T."/>
            <person name="Bashirzadeh R."/>
            <person name="Blakely D."/>
            <person name="Cook R."/>
            <person name="Gilbert K."/>
            <person name="Harrison D."/>
            <person name="Hoang L."/>
            <person name="Keagle P."/>
            <person name="Lumm W."/>
            <person name="Pothier B."/>
            <person name="Qiu D."/>
            <person name="Spadafora R."/>
            <person name="Vicare R."/>
            <person name="Wang Y."/>
            <person name="Wierzbowski J."/>
            <person name="Gibson R."/>
            <person name="Jiwani N."/>
            <person name="Caruso A."/>
            <person name="Bush D."/>
            <person name="Safer H."/>
            <person name="Patwell D."/>
            <person name="Prabhakar S."/>
            <person name="McDougall S."/>
            <person name="Shimer G."/>
            <person name="Goyal A."/>
            <person name="Pietrovski S."/>
            <person name="Church G.M."/>
            <person name="Daniels C.J."/>
            <person name="Mao J.-I."/>
            <person name="Rice P."/>
            <person name="Noelling J."/>
            <person name="Reeve J.N."/>
        </authorList>
    </citation>
    <scope>NUCLEOTIDE SEQUENCE [LARGE SCALE GENOMIC DNA]</scope>
    <source>
        <strain>ATCC 29096 / DSM 1053 / JCM 10044 / NBRC 100330 / Delta H</strain>
    </source>
</reference>
<accession>O27125</accession>
<evidence type="ECO:0000255" key="1">
    <source>
        <dbReference type="HAMAP-Rule" id="MF_00863"/>
    </source>
</evidence>
<protein>
    <recommendedName>
        <fullName evidence="1">DNA-directed RNA polymerase subunit Rpo1N</fullName>
        <ecNumber evidence="1">2.7.7.6</ecNumber>
    </recommendedName>
    <alternativeName>
        <fullName evidence="1">DNA-directed RNA polymerase subunit A'</fullName>
    </alternativeName>
</protein>
<organism>
    <name type="scientific">Methanothermobacter thermautotrophicus (strain ATCC 29096 / DSM 1053 / JCM 10044 / NBRC 100330 / Delta H)</name>
    <name type="common">Methanobacterium thermoautotrophicum</name>
    <dbReference type="NCBI Taxonomy" id="187420"/>
    <lineage>
        <taxon>Archaea</taxon>
        <taxon>Methanobacteriati</taxon>
        <taxon>Methanobacteriota</taxon>
        <taxon>Methanomada group</taxon>
        <taxon>Methanobacteria</taxon>
        <taxon>Methanobacteriales</taxon>
        <taxon>Methanobacteriaceae</taxon>
        <taxon>Methanothermobacter</taxon>
    </lineage>
</organism>
<keyword id="KW-0963">Cytoplasm</keyword>
<keyword id="KW-0238">DNA-binding</keyword>
<keyword id="KW-0240">DNA-directed RNA polymerase</keyword>
<keyword id="KW-0460">Magnesium</keyword>
<keyword id="KW-0479">Metal-binding</keyword>
<keyword id="KW-0548">Nucleotidyltransferase</keyword>
<keyword id="KW-1185">Reference proteome</keyword>
<keyword id="KW-0804">Transcription</keyword>
<keyword id="KW-0808">Transferase</keyword>
<keyword id="KW-0862">Zinc</keyword>
<feature type="chain" id="PRO_0000074004" description="DNA-directed RNA polymerase subunit Rpo1N">
    <location>
        <begin position="1"/>
        <end position="870"/>
    </location>
</feature>
<feature type="binding site" evidence="1">
    <location>
        <position position="60"/>
    </location>
    <ligand>
        <name>Zn(2+)</name>
        <dbReference type="ChEBI" id="CHEBI:29105"/>
        <label>1</label>
    </ligand>
</feature>
<feature type="binding site" evidence="1">
    <location>
        <position position="63"/>
    </location>
    <ligand>
        <name>Zn(2+)</name>
        <dbReference type="ChEBI" id="CHEBI:29105"/>
        <label>1</label>
    </ligand>
</feature>
<feature type="binding site" evidence="1">
    <location>
        <position position="70"/>
    </location>
    <ligand>
        <name>Zn(2+)</name>
        <dbReference type="ChEBI" id="CHEBI:29105"/>
        <label>1</label>
    </ligand>
</feature>
<feature type="binding site" evidence="1">
    <location>
        <position position="73"/>
    </location>
    <ligand>
        <name>Zn(2+)</name>
        <dbReference type="ChEBI" id="CHEBI:29105"/>
        <label>1</label>
    </ligand>
</feature>
<feature type="binding site" evidence="1">
    <location>
        <position position="100"/>
    </location>
    <ligand>
        <name>Zn(2+)</name>
        <dbReference type="ChEBI" id="CHEBI:29105"/>
        <label>2</label>
    </ligand>
</feature>
<feature type="binding site" evidence="1">
    <location>
        <position position="103"/>
    </location>
    <ligand>
        <name>Zn(2+)</name>
        <dbReference type="ChEBI" id="CHEBI:29105"/>
        <label>2</label>
    </ligand>
</feature>
<feature type="binding site" evidence="1">
    <location>
        <position position="146"/>
    </location>
    <ligand>
        <name>Zn(2+)</name>
        <dbReference type="ChEBI" id="CHEBI:29105"/>
        <label>2</label>
    </ligand>
</feature>
<feature type="binding site" evidence="1">
    <location>
        <position position="149"/>
    </location>
    <ligand>
        <name>Zn(2+)</name>
        <dbReference type="ChEBI" id="CHEBI:29105"/>
        <label>2</label>
    </ligand>
</feature>
<feature type="binding site" evidence="1">
    <location>
        <position position="451"/>
    </location>
    <ligand>
        <name>Mg(2+)</name>
        <dbReference type="ChEBI" id="CHEBI:18420"/>
    </ligand>
</feature>
<feature type="binding site" evidence="1">
    <location>
        <position position="453"/>
    </location>
    <ligand>
        <name>Mg(2+)</name>
        <dbReference type="ChEBI" id="CHEBI:18420"/>
    </ligand>
</feature>
<feature type="binding site" evidence="1">
    <location>
        <position position="455"/>
    </location>
    <ligand>
        <name>Mg(2+)</name>
        <dbReference type="ChEBI" id="CHEBI:18420"/>
    </ligand>
</feature>
<comment type="function">
    <text evidence="1">DNA-dependent RNA polymerase (RNAP) catalyzes the transcription of DNA into RNA using the four ribonucleoside triphosphates as substrates. Forms the clamp head domain.</text>
</comment>
<comment type="catalytic activity">
    <reaction evidence="1">
        <text>RNA(n) + a ribonucleoside 5'-triphosphate = RNA(n+1) + diphosphate</text>
        <dbReference type="Rhea" id="RHEA:21248"/>
        <dbReference type="Rhea" id="RHEA-COMP:14527"/>
        <dbReference type="Rhea" id="RHEA-COMP:17342"/>
        <dbReference type="ChEBI" id="CHEBI:33019"/>
        <dbReference type="ChEBI" id="CHEBI:61557"/>
        <dbReference type="ChEBI" id="CHEBI:140395"/>
        <dbReference type="EC" id="2.7.7.6"/>
    </reaction>
</comment>
<comment type="cofactor">
    <cofactor evidence="1">
        <name>Mg(2+)</name>
        <dbReference type="ChEBI" id="CHEBI:18420"/>
    </cofactor>
</comment>
<comment type="cofactor">
    <cofactor evidence="1">
        <name>Zn(2+)</name>
        <dbReference type="ChEBI" id="CHEBI:29105"/>
    </cofactor>
    <text evidence="1">Binds at least 2 Zn(2+) per subunit.</text>
</comment>
<comment type="subunit">
    <text evidence="1">Part of the RNA polymerase complex.</text>
</comment>
<comment type="subcellular location">
    <subcellularLocation>
        <location evidence="1">Cytoplasm</location>
    </subcellularLocation>
</comment>
<comment type="similarity">
    <text evidence="1">Belongs to the RNA polymerase beta' chain family.</text>
</comment>
<gene>
    <name evidence="1" type="primary">rpo1N</name>
    <name evidence="1" type="synonym">rpoA1</name>
    <name type="ordered locus">MTH_1051</name>
</gene>